<organism>
    <name type="scientific">Carnation latent virus</name>
    <name type="common">CLV</name>
    <dbReference type="NCBI Taxonomy" id="12164"/>
    <lineage>
        <taxon>Viruses</taxon>
        <taxon>Riboviria</taxon>
        <taxon>Orthornavirae</taxon>
        <taxon>Kitrinoviricota</taxon>
        <taxon>Alsuviricetes</taxon>
        <taxon>Tymovirales</taxon>
        <taxon>Betaflexiviridae</taxon>
        <taxon>Quinvirinae</taxon>
        <taxon>Carlavirus</taxon>
    </lineage>
</organism>
<proteinExistence type="inferred from homology"/>
<comment type="function">
    <text evidence="1">Plays a role in viral cell-to-cell propagation, by facilitating genome transport to neighboring plant cells through plasmosdesmata. May induce the formation of granular vesicles derived from the Endoplasmic reticulum, which align on actin filaments (By similarity).</text>
</comment>
<comment type="subcellular location">
    <subcellularLocation>
        <location evidence="1">Host endoplasmic reticulum membrane</location>
    </subcellularLocation>
</comment>
<comment type="miscellaneous">
    <text>TGBp1, TGBp2 and TGBp3 seem to act together for cell-to-cell propagation. TGBp1 is the main movement protein that physically cross the plasmodesma with the viral genome. TGBp2 and TGBp3 would facilitate TGBp1 function.</text>
</comment>
<comment type="similarity">
    <text evidence="3">Belongs to the Tymovirales TGBp3 protein family.</text>
</comment>
<keyword id="KW-1038">Host endoplasmic reticulum</keyword>
<keyword id="KW-1043">Host membrane</keyword>
<keyword id="KW-0472">Membrane</keyword>
<keyword id="KW-0812">Transmembrane</keyword>
<keyword id="KW-1133">Transmembrane helix</keyword>
<keyword id="KW-0813">Transport</keyword>
<keyword id="KW-0916">Viral movement protein</keyword>
<gene>
    <name type="ORF">ORF4</name>
</gene>
<protein>
    <recommendedName>
        <fullName>Movement protein TGBp3</fullName>
    </recommendedName>
    <alternativeName>
        <fullName>7 kDa protein</fullName>
    </alternativeName>
    <alternativeName>
        <fullName>Triple gene block 3 protein</fullName>
        <shortName>TGBp3</shortName>
    </alternativeName>
</protein>
<dbReference type="EMBL" id="X55331">
    <property type="protein sequence ID" value="CAA39030.1"/>
    <property type="molecule type" value="Genomic_RNA"/>
</dbReference>
<dbReference type="PIR" id="S12405">
    <property type="entry name" value="S12405"/>
</dbReference>
<dbReference type="GO" id="GO:0044167">
    <property type="term" value="C:host cell endoplasmic reticulum membrane"/>
    <property type="evidence" value="ECO:0007669"/>
    <property type="project" value="UniProtKB-SubCell"/>
</dbReference>
<dbReference type="GO" id="GO:0016020">
    <property type="term" value="C:membrane"/>
    <property type="evidence" value="ECO:0007669"/>
    <property type="project" value="UniProtKB-KW"/>
</dbReference>
<dbReference type="GO" id="GO:0046740">
    <property type="term" value="P:transport of virus in host, cell to cell"/>
    <property type="evidence" value="ECO:0007669"/>
    <property type="project" value="UniProtKB-KW"/>
</dbReference>
<dbReference type="InterPro" id="IPR003411">
    <property type="entry name" value="TGBp3"/>
</dbReference>
<dbReference type="Pfam" id="PF02495">
    <property type="entry name" value="TGBp3"/>
    <property type="match status" value="1"/>
</dbReference>
<reference key="1">
    <citation type="journal article" date="1990" name="Plant Mol. Biol.">
        <title>Nucleotide sequence of the 7K gene of carnation latent virus.</title>
        <authorList>
            <person name="Foster G.D."/>
            <person name="Meehan B.M."/>
            <person name="Mills P.R."/>
        </authorList>
    </citation>
    <scope>NUCLEOTIDE SEQUENCE [GENOMIC RNA]</scope>
</reference>
<evidence type="ECO:0000250" key="1"/>
<evidence type="ECO:0000255" key="2"/>
<evidence type="ECO:0000305" key="3"/>
<name>TGB3_CLV</name>
<sequence length="65" mass="6843">MQASGLILVALFSAVVSYLALLHLSSSSSSCVVVVTGESFRISGCDFTEEFIGFAKTLRVANSQP</sequence>
<organismHost>
    <name type="scientific">Dianthus caryophyllus</name>
    <name type="common">Carnation</name>
    <name type="synonym">Clove pink</name>
    <dbReference type="NCBI Taxonomy" id="3570"/>
</organismHost>
<accession>P28898</accession>
<feature type="chain" id="PRO_0000222613" description="Movement protein TGBp3">
    <location>
        <begin position="1"/>
        <end position="65"/>
    </location>
</feature>
<feature type="topological domain" description="Lumenal" evidence="2">
    <location>
        <begin position="1"/>
        <end position="3"/>
    </location>
</feature>
<feature type="transmembrane region" description="Helical" evidence="2">
    <location>
        <begin position="4"/>
        <end position="24"/>
    </location>
</feature>
<feature type="topological domain" description="Cytoplasmic" evidence="2">
    <location>
        <begin position="25"/>
        <end position="65"/>
    </location>
</feature>